<gene>
    <name type="primary">dsbA</name>
    <name type="ordered locus">BB4940</name>
</gene>
<organism>
    <name type="scientific">Bordetella bronchiseptica (strain ATCC BAA-588 / NCTC 13252 / RB50)</name>
    <name type="common">Alcaligenes bronchisepticus</name>
    <dbReference type="NCBI Taxonomy" id="257310"/>
    <lineage>
        <taxon>Bacteria</taxon>
        <taxon>Pseudomonadati</taxon>
        <taxon>Pseudomonadota</taxon>
        <taxon>Betaproteobacteria</taxon>
        <taxon>Burkholderiales</taxon>
        <taxon>Alcaligenaceae</taxon>
        <taxon>Bordetella</taxon>
    </lineage>
</organism>
<comment type="function">
    <text evidence="1">Involved in disulfide-bond formation. Acts by transferring its disulfide bond to other proteins (By similarity).</text>
</comment>
<comment type="subcellular location">
    <subcellularLocation>
        <location evidence="1">Periplasm</location>
    </subcellularLocation>
</comment>
<comment type="similarity">
    <text evidence="4">Belongs to the thioredoxin family. DsbA subfamily.</text>
</comment>
<reference key="1">
    <citation type="journal article" date="2003" name="Nat. Genet.">
        <title>Comparative analysis of the genome sequences of Bordetella pertussis, Bordetella parapertussis and Bordetella bronchiseptica.</title>
        <authorList>
            <person name="Parkhill J."/>
            <person name="Sebaihia M."/>
            <person name="Preston A."/>
            <person name="Murphy L.D."/>
            <person name="Thomson N.R."/>
            <person name="Harris D.E."/>
            <person name="Holden M.T.G."/>
            <person name="Churcher C.M."/>
            <person name="Bentley S.D."/>
            <person name="Mungall K.L."/>
            <person name="Cerdeno-Tarraga A.-M."/>
            <person name="Temple L."/>
            <person name="James K.D."/>
            <person name="Harris B."/>
            <person name="Quail M.A."/>
            <person name="Achtman M."/>
            <person name="Atkin R."/>
            <person name="Baker S."/>
            <person name="Basham D."/>
            <person name="Bason N."/>
            <person name="Cherevach I."/>
            <person name="Chillingworth T."/>
            <person name="Collins M."/>
            <person name="Cronin A."/>
            <person name="Davis P."/>
            <person name="Doggett J."/>
            <person name="Feltwell T."/>
            <person name="Goble A."/>
            <person name="Hamlin N."/>
            <person name="Hauser H."/>
            <person name="Holroyd S."/>
            <person name="Jagels K."/>
            <person name="Leather S."/>
            <person name="Moule S."/>
            <person name="Norberczak H."/>
            <person name="O'Neil S."/>
            <person name="Ormond D."/>
            <person name="Price C."/>
            <person name="Rabbinowitsch E."/>
            <person name="Rutter S."/>
            <person name="Sanders M."/>
            <person name="Saunders D."/>
            <person name="Seeger K."/>
            <person name="Sharp S."/>
            <person name="Simmonds M."/>
            <person name="Skelton J."/>
            <person name="Squares R."/>
            <person name="Squares S."/>
            <person name="Stevens K."/>
            <person name="Unwin L."/>
            <person name="Whitehead S."/>
            <person name="Barrell B.G."/>
            <person name="Maskell D.J."/>
        </authorList>
    </citation>
    <scope>NUCLEOTIDE SEQUENCE [LARGE SCALE GENOMIC DNA]</scope>
    <source>
        <strain>ATCC BAA-588 / NCTC 13252 / RB50</strain>
    </source>
</reference>
<accession>Q7WDP8</accession>
<protein>
    <recommendedName>
        <fullName>Thiol:disulfide interchange protein DsbA</fullName>
    </recommendedName>
</protein>
<keyword id="KW-1015">Disulfide bond</keyword>
<keyword id="KW-0574">Periplasm</keyword>
<keyword id="KW-0676">Redox-active center</keyword>
<keyword id="KW-0732">Signal</keyword>
<evidence type="ECO:0000250" key="1"/>
<evidence type="ECO:0000255" key="2"/>
<evidence type="ECO:0000255" key="3">
    <source>
        <dbReference type="PROSITE-ProRule" id="PRU00691"/>
    </source>
</evidence>
<evidence type="ECO:0000305" key="4"/>
<feature type="signal peptide" evidence="2">
    <location>
        <begin position="1"/>
        <end position="27"/>
    </location>
</feature>
<feature type="chain" id="PRO_0000245630" description="Thiol:disulfide interchange protein DsbA">
    <location>
        <begin position="28"/>
        <end position="209"/>
    </location>
</feature>
<feature type="domain" description="Thioredoxin" evidence="3">
    <location>
        <begin position="29"/>
        <end position="166"/>
    </location>
</feature>
<feature type="disulfide bond" description="Redox-active" evidence="3">
    <location>
        <begin position="58"/>
        <end position="61"/>
    </location>
</feature>
<sequence>MQSTTFTRLLAAAALAATTLFAPATQAQGAQQYVNINPPMPSDTPGKIEVLEFFAYTCPHCAAIEPMVEDWAKTAPQDVVLKQVPIAFNAGMKPLQQLYYTLQALERPDLHPKVFTAIHTERKRLFDKKAMGEWAASQGVDRAKFDSVFDSFSVQTQVQRASQLAEAAHIDGTPAFAVGGRYMTSPVLAGNDYAGALKVVDQLIVQSRK</sequence>
<name>DSBA_BORBR</name>
<dbReference type="EMBL" id="BX640452">
    <property type="protein sequence ID" value="CAE35304.1"/>
    <property type="molecule type" value="Genomic_DNA"/>
</dbReference>
<dbReference type="RefSeq" id="WP_003815939.1">
    <property type="nucleotide sequence ID" value="NC_002927.3"/>
</dbReference>
<dbReference type="SMR" id="Q7WDP8"/>
<dbReference type="KEGG" id="bbr:BB4940"/>
<dbReference type="eggNOG" id="COG1651">
    <property type="taxonomic scope" value="Bacteria"/>
</dbReference>
<dbReference type="HOGENOM" id="CLU_088255_1_0_4"/>
<dbReference type="Proteomes" id="UP000001027">
    <property type="component" value="Chromosome"/>
</dbReference>
<dbReference type="GO" id="GO:0042597">
    <property type="term" value="C:periplasmic space"/>
    <property type="evidence" value="ECO:0007669"/>
    <property type="project" value="UniProtKB-SubCell"/>
</dbReference>
<dbReference type="GO" id="GO:0015036">
    <property type="term" value="F:disulfide oxidoreductase activity"/>
    <property type="evidence" value="ECO:0007669"/>
    <property type="project" value="UniProtKB-ARBA"/>
</dbReference>
<dbReference type="CDD" id="cd03019">
    <property type="entry name" value="DsbA_DsbA"/>
    <property type="match status" value="1"/>
</dbReference>
<dbReference type="Gene3D" id="3.40.30.10">
    <property type="entry name" value="Glutaredoxin"/>
    <property type="match status" value="1"/>
</dbReference>
<dbReference type="InterPro" id="IPR001853">
    <property type="entry name" value="DSBA-like_thioredoxin_dom"/>
</dbReference>
<dbReference type="InterPro" id="IPR023205">
    <property type="entry name" value="DsbA/DsbL"/>
</dbReference>
<dbReference type="InterPro" id="IPR050824">
    <property type="entry name" value="Thiol_disulfide_DsbA"/>
</dbReference>
<dbReference type="InterPro" id="IPR036249">
    <property type="entry name" value="Thioredoxin-like_sf"/>
</dbReference>
<dbReference type="InterPro" id="IPR017937">
    <property type="entry name" value="Thioredoxin_CS"/>
</dbReference>
<dbReference type="InterPro" id="IPR013766">
    <property type="entry name" value="Thioredoxin_domain"/>
</dbReference>
<dbReference type="PANTHER" id="PTHR35891">
    <property type="entry name" value="THIOL:DISULFIDE INTERCHANGE PROTEIN DSBA"/>
    <property type="match status" value="1"/>
</dbReference>
<dbReference type="PANTHER" id="PTHR35891:SF3">
    <property type="entry name" value="THIOL:DISULFIDE INTERCHANGE PROTEIN DSBL"/>
    <property type="match status" value="1"/>
</dbReference>
<dbReference type="Pfam" id="PF01323">
    <property type="entry name" value="DSBA"/>
    <property type="match status" value="1"/>
</dbReference>
<dbReference type="Pfam" id="PF00085">
    <property type="entry name" value="Thioredoxin"/>
    <property type="match status" value="1"/>
</dbReference>
<dbReference type="PIRSF" id="PIRSF001488">
    <property type="entry name" value="Tdi_protein"/>
    <property type="match status" value="1"/>
</dbReference>
<dbReference type="SUPFAM" id="SSF52833">
    <property type="entry name" value="Thioredoxin-like"/>
    <property type="match status" value="1"/>
</dbReference>
<dbReference type="PROSITE" id="PS00194">
    <property type="entry name" value="THIOREDOXIN_1"/>
    <property type="match status" value="1"/>
</dbReference>
<dbReference type="PROSITE" id="PS51352">
    <property type="entry name" value="THIOREDOXIN_2"/>
    <property type="match status" value="1"/>
</dbReference>
<proteinExistence type="inferred from homology"/>